<feature type="chain" id="PRO_0000237298" description="DNA-directed RNA polymerase subunit beta">
    <location>
        <begin position="1"/>
        <end position="1370"/>
    </location>
</feature>
<organism>
    <name type="scientific">Bordetella avium (strain 197N)</name>
    <dbReference type="NCBI Taxonomy" id="360910"/>
    <lineage>
        <taxon>Bacteria</taxon>
        <taxon>Pseudomonadati</taxon>
        <taxon>Pseudomonadota</taxon>
        <taxon>Betaproteobacteria</taxon>
        <taxon>Burkholderiales</taxon>
        <taxon>Alcaligenaceae</taxon>
        <taxon>Bordetella</taxon>
    </lineage>
</organism>
<name>RPOB_BORA1</name>
<proteinExistence type="inferred from homology"/>
<reference key="1">
    <citation type="journal article" date="2006" name="J. Bacteriol.">
        <title>Comparison of the genome sequence of the poultry pathogen Bordetella avium with those of B. bronchiseptica, B. pertussis, and B. parapertussis reveals extensive diversity in surface structures associated with host interaction.</title>
        <authorList>
            <person name="Sebaihia M."/>
            <person name="Preston A."/>
            <person name="Maskell D.J."/>
            <person name="Kuzmiak H."/>
            <person name="Connell T.D."/>
            <person name="King N.D."/>
            <person name="Orndorff P.E."/>
            <person name="Miyamoto D.M."/>
            <person name="Thomson N.R."/>
            <person name="Harris D."/>
            <person name="Goble A."/>
            <person name="Lord A."/>
            <person name="Murphy L."/>
            <person name="Quail M.A."/>
            <person name="Rutter S."/>
            <person name="Squares R."/>
            <person name="Squares S."/>
            <person name="Woodward J."/>
            <person name="Parkhill J."/>
            <person name="Temple L.M."/>
        </authorList>
    </citation>
    <scope>NUCLEOTIDE SEQUENCE [LARGE SCALE GENOMIC DNA]</scope>
    <source>
        <strain>197N</strain>
    </source>
</reference>
<comment type="function">
    <text evidence="1">DNA-dependent RNA polymerase catalyzes the transcription of DNA into RNA using the four ribonucleoside triphosphates as substrates.</text>
</comment>
<comment type="catalytic activity">
    <reaction evidence="1">
        <text>RNA(n) + a ribonucleoside 5'-triphosphate = RNA(n+1) + diphosphate</text>
        <dbReference type="Rhea" id="RHEA:21248"/>
        <dbReference type="Rhea" id="RHEA-COMP:14527"/>
        <dbReference type="Rhea" id="RHEA-COMP:17342"/>
        <dbReference type="ChEBI" id="CHEBI:33019"/>
        <dbReference type="ChEBI" id="CHEBI:61557"/>
        <dbReference type="ChEBI" id="CHEBI:140395"/>
        <dbReference type="EC" id="2.7.7.6"/>
    </reaction>
</comment>
<comment type="subunit">
    <text evidence="1">The RNAP catalytic core consists of 2 alpha, 1 beta, 1 beta' and 1 omega subunit. When a sigma factor is associated with the core the holoenzyme is formed, which can initiate transcription.</text>
</comment>
<comment type="similarity">
    <text evidence="1">Belongs to the RNA polymerase beta chain family.</text>
</comment>
<comment type="sequence caution" evidence="2">
    <conflict type="erroneous initiation">
        <sequence resource="EMBL-CDS" id="CAJ47597"/>
    </conflict>
</comment>
<keyword id="KW-0240">DNA-directed RNA polymerase</keyword>
<keyword id="KW-0548">Nucleotidyltransferase</keyword>
<keyword id="KW-1185">Reference proteome</keyword>
<keyword id="KW-0804">Transcription</keyword>
<keyword id="KW-0808">Transferase</keyword>
<evidence type="ECO:0000255" key="1">
    <source>
        <dbReference type="HAMAP-Rule" id="MF_01321"/>
    </source>
</evidence>
<evidence type="ECO:0000305" key="2"/>
<protein>
    <recommendedName>
        <fullName evidence="1">DNA-directed RNA polymerase subunit beta</fullName>
        <shortName evidence="1">RNAP subunit beta</shortName>
        <ecNumber evidence="1">2.7.7.6</ecNumber>
    </recommendedName>
    <alternativeName>
        <fullName evidence="1">RNA polymerase subunit beta</fullName>
    </alternativeName>
    <alternativeName>
        <fullName evidence="1">Transcriptase subunit beta</fullName>
    </alternativeName>
</protein>
<accession>Q2L2M3</accession>
<dbReference type="EC" id="2.7.7.6" evidence="1"/>
<dbReference type="EMBL" id="AM167904">
    <property type="protein sequence ID" value="CAJ47597.1"/>
    <property type="status" value="ALT_INIT"/>
    <property type="molecule type" value="Genomic_DNA"/>
</dbReference>
<dbReference type="RefSeq" id="WP_039052216.1">
    <property type="nucleotide sequence ID" value="NC_010645.1"/>
</dbReference>
<dbReference type="SMR" id="Q2L2M3"/>
<dbReference type="STRING" id="360910.BAV0013"/>
<dbReference type="GeneID" id="92936742"/>
<dbReference type="KEGG" id="bav:BAV0013"/>
<dbReference type="eggNOG" id="COG0085">
    <property type="taxonomic scope" value="Bacteria"/>
</dbReference>
<dbReference type="HOGENOM" id="CLU_000524_4_3_4"/>
<dbReference type="OrthoDB" id="9803954at2"/>
<dbReference type="Proteomes" id="UP000001977">
    <property type="component" value="Chromosome"/>
</dbReference>
<dbReference type="GO" id="GO:0000428">
    <property type="term" value="C:DNA-directed RNA polymerase complex"/>
    <property type="evidence" value="ECO:0007669"/>
    <property type="project" value="UniProtKB-KW"/>
</dbReference>
<dbReference type="GO" id="GO:0003677">
    <property type="term" value="F:DNA binding"/>
    <property type="evidence" value="ECO:0007669"/>
    <property type="project" value="UniProtKB-UniRule"/>
</dbReference>
<dbReference type="GO" id="GO:0003899">
    <property type="term" value="F:DNA-directed RNA polymerase activity"/>
    <property type="evidence" value="ECO:0007669"/>
    <property type="project" value="UniProtKB-UniRule"/>
</dbReference>
<dbReference type="GO" id="GO:0032549">
    <property type="term" value="F:ribonucleoside binding"/>
    <property type="evidence" value="ECO:0007669"/>
    <property type="project" value="InterPro"/>
</dbReference>
<dbReference type="GO" id="GO:0006351">
    <property type="term" value="P:DNA-templated transcription"/>
    <property type="evidence" value="ECO:0007669"/>
    <property type="project" value="UniProtKB-UniRule"/>
</dbReference>
<dbReference type="CDD" id="cd00653">
    <property type="entry name" value="RNA_pol_B_RPB2"/>
    <property type="match status" value="1"/>
</dbReference>
<dbReference type="FunFam" id="2.40.50.100:FF:000006">
    <property type="entry name" value="DNA-directed RNA polymerase subunit beta"/>
    <property type="match status" value="1"/>
</dbReference>
<dbReference type="FunFam" id="3.90.1800.10:FF:000001">
    <property type="entry name" value="DNA-directed RNA polymerase subunit beta"/>
    <property type="match status" value="1"/>
</dbReference>
<dbReference type="Gene3D" id="2.40.50.100">
    <property type="match status" value="1"/>
</dbReference>
<dbReference type="Gene3D" id="2.40.50.150">
    <property type="match status" value="1"/>
</dbReference>
<dbReference type="Gene3D" id="3.90.1100.10">
    <property type="match status" value="2"/>
</dbReference>
<dbReference type="Gene3D" id="6.10.140.1670">
    <property type="match status" value="1"/>
</dbReference>
<dbReference type="Gene3D" id="2.30.150.10">
    <property type="entry name" value="DNA-directed RNA polymerase, beta subunit, external 1 domain"/>
    <property type="match status" value="1"/>
</dbReference>
<dbReference type="Gene3D" id="2.40.270.10">
    <property type="entry name" value="DNA-directed RNA polymerase, subunit 2, domain 6"/>
    <property type="match status" value="1"/>
</dbReference>
<dbReference type="Gene3D" id="3.90.1800.10">
    <property type="entry name" value="RNA polymerase alpha subunit dimerisation domain"/>
    <property type="match status" value="1"/>
</dbReference>
<dbReference type="Gene3D" id="3.90.1110.10">
    <property type="entry name" value="RNA polymerase Rpb2, domain 2"/>
    <property type="match status" value="1"/>
</dbReference>
<dbReference type="HAMAP" id="MF_01321">
    <property type="entry name" value="RNApol_bact_RpoB"/>
    <property type="match status" value="1"/>
</dbReference>
<dbReference type="InterPro" id="IPR042107">
    <property type="entry name" value="DNA-dir_RNA_pol_bsu_ext_1_sf"/>
</dbReference>
<dbReference type="InterPro" id="IPR019462">
    <property type="entry name" value="DNA-dir_RNA_pol_bsu_external_1"/>
</dbReference>
<dbReference type="InterPro" id="IPR015712">
    <property type="entry name" value="DNA-dir_RNA_pol_su2"/>
</dbReference>
<dbReference type="InterPro" id="IPR007120">
    <property type="entry name" value="DNA-dir_RNAP_su2_dom"/>
</dbReference>
<dbReference type="InterPro" id="IPR037033">
    <property type="entry name" value="DNA-dir_RNAP_su2_hyb_sf"/>
</dbReference>
<dbReference type="InterPro" id="IPR010243">
    <property type="entry name" value="RNA_pol_bsu_bac"/>
</dbReference>
<dbReference type="InterPro" id="IPR007121">
    <property type="entry name" value="RNA_pol_bsu_CS"/>
</dbReference>
<dbReference type="InterPro" id="IPR007644">
    <property type="entry name" value="RNA_pol_bsu_protrusion"/>
</dbReference>
<dbReference type="InterPro" id="IPR007642">
    <property type="entry name" value="RNA_pol_Rpb2_2"/>
</dbReference>
<dbReference type="InterPro" id="IPR037034">
    <property type="entry name" value="RNA_pol_Rpb2_2_sf"/>
</dbReference>
<dbReference type="InterPro" id="IPR007645">
    <property type="entry name" value="RNA_pol_Rpb2_3"/>
</dbReference>
<dbReference type="InterPro" id="IPR007641">
    <property type="entry name" value="RNA_pol_Rpb2_7"/>
</dbReference>
<dbReference type="InterPro" id="IPR014724">
    <property type="entry name" value="RNA_pol_RPB2_OB-fold"/>
</dbReference>
<dbReference type="NCBIfam" id="NF001616">
    <property type="entry name" value="PRK00405.1"/>
    <property type="match status" value="1"/>
</dbReference>
<dbReference type="NCBIfam" id="TIGR02013">
    <property type="entry name" value="rpoB"/>
    <property type="match status" value="1"/>
</dbReference>
<dbReference type="PANTHER" id="PTHR20856">
    <property type="entry name" value="DNA-DIRECTED RNA POLYMERASE I SUBUNIT 2"/>
    <property type="match status" value="1"/>
</dbReference>
<dbReference type="Pfam" id="PF04563">
    <property type="entry name" value="RNA_pol_Rpb2_1"/>
    <property type="match status" value="1"/>
</dbReference>
<dbReference type="Pfam" id="PF04561">
    <property type="entry name" value="RNA_pol_Rpb2_2"/>
    <property type="match status" value="2"/>
</dbReference>
<dbReference type="Pfam" id="PF04565">
    <property type="entry name" value="RNA_pol_Rpb2_3"/>
    <property type="match status" value="1"/>
</dbReference>
<dbReference type="Pfam" id="PF10385">
    <property type="entry name" value="RNA_pol_Rpb2_45"/>
    <property type="match status" value="1"/>
</dbReference>
<dbReference type="Pfam" id="PF00562">
    <property type="entry name" value="RNA_pol_Rpb2_6"/>
    <property type="match status" value="1"/>
</dbReference>
<dbReference type="Pfam" id="PF04560">
    <property type="entry name" value="RNA_pol_Rpb2_7"/>
    <property type="match status" value="1"/>
</dbReference>
<dbReference type="SUPFAM" id="SSF64484">
    <property type="entry name" value="beta and beta-prime subunits of DNA dependent RNA-polymerase"/>
    <property type="match status" value="1"/>
</dbReference>
<dbReference type="PROSITE" id="PS01166">
    <property type="entry name" value="RNA_POL_BETA"/>
    <property type="match status" value="1"/>
</dbReference>
<sequence>MPYSYTEKKRIRKSFAKREDVQNVPFLLATQLQSYLTFLQAETATADRVNEGLQAAFTSIFPIVSHNGMARLEFVSYALGEPVFDVKECQQRGLTYASPLRAKVRLVLLDREVSKPTIKEVKEQEVYMGEIPLMTTTGSFVINGTERVIVSQLHRSPGVFFEHDRGKTHSSGKLLFSARVIPYRGSWLDFEFDPKDVLFFRVDRRRKMPVTILLKAIGMTPESILAHFFDFDNFELKSEGAMMEFVPERWKGEMARFDITDRAGKVIVEKDKRINAKHLRDLANGGIQRISVPEDFLYGRVLAKNVVDPDTGEVIALANDEITESVLDAMRAAKVLDLQTLYTNDLDRGPYISQTLRTDETVDQTAARVAIYRMMRPGEPPTEEAVEALFQRLFYSEETYDLSRVGRMKVNSRLGRGDDANGPMTLTDEDILETIKVLVELRNGRGQIDDIDHLGNRRVRCVGELAENQFRAGLVRVERAVKERLGQAETENLMPHDLINSKPISAAIKEFFGSSQLSQFMDQTNPLSEITHKRRVSALGPGGLTRERAGFEVRDVHPTHYGRVCPIETPEGPNIGLINSMALYARLNEYGFLETPYRKIIDGRVSDQIDYLSAIEESHYVIAQANAALDAEGRFVDDLVACREAGETMLTSPVNVHYMDVAPSQIVSVAASLIPFLEHDDANRALMGANMQRQAVPCLRPEKPLVGTGIERTVAVDSGTTVQALRGGLVDHVDAERVVIRVNDEENVAGEVGVDIYNLIKYTRSNQNTNINQRPIVKRGDRVAKGDVLADGASTDLGELALGQNMLIAFMPWNGYNFEDSILISERVVADDRYTSVHIEELTVVARDTKLGPEEITRDISNLAETQLNRLDESGIVYIGAEVSADDVLVGKVTPKGETQLTPEEKLLRAIFGEKASDVKDTSLRVPSGMTGTVIDVQVFTREGIVRDKRAQSIIDDELRRYRQDLNDQLRIVENDQFDRIEKLLVGKTVNGGPRKLAKGATVTKAYLADLDRWQWFDIRLSDEPHAVVLEQAKESLEQKRHQFDLAFEEKRKKLTQGDELPPGVLKMIKVYLAVKRRLQPGDKMAGRHGNKGVVSRITPVEDMPHMADGTTADIVLNPLGVPSRMNVGQVLEVHLGWAAKGVGQRIADMLQDERTAQVKNIRAYLEKVYNTTGTGARISELSDEEVIELANNLKRGVPFATPVFDGATEDEITMMLELAYPDDVAKRMQLTPSRAQAWLFDGRTGEKFERPVTIGYMHYLKLHHLVDDKMHARSTGPYSLVTQQPLGGKAQFGGQRFGEMEVWALEAYGASYTLQEMLTVKSDDITGRTKVYENIVKGDHVIDAGMPESFNVLVKEIRSLALDMDLERN</sequence>
<gene>
    <name evidence="1" type="primary">rpoB</name>
    <name type="ordered locus">BAV0013</name>
</gene>